<gene>
    <name evidence="1" type="primary">bioB</name>
    <name type="ordered locus">XAC0388</name>
</gene>
<accession>Q8PQD7</accession>
<reference key="1">
    <citation type="journal article" date="2002" name="Nature">
        <title>Comparison of the genomes of two Xanthomonas pathogens with differing host specificities.</title>
        <authorList>
            <person name="da Silva A.C.R."/>
            <person name="Ferro J.A."/>
            <person name="Reinach F.C."/>
            <person name="Farah C.S."/>
            <person name="Furlan L.R."/>
            <person name="Quaggio R.B."/>
            <person name="Monteiro-Vitorello C.B."/>
            <person name="Van Sluys M.A."/>
            <person name="Almeida N.F. Jr."/>
            <person name="Alves L.M.C."/>
            <person name="do Amaral A.M."/>
            <person name="Bertolini M.C."/>
            <person name="Camargo L.E.A."/>
            <person name="Camarotte G."/>
            <person name="Cannavan F."/>
            <person name="Cardozo J."/>
            <person name="Chambergo F."/>
            <person name="Ciapina L.P."/>
            <person name="Cicarelli R.M.B."/>
            <person name="Coutinho L.L."/>
            <person name="Cursino-Santos J.R."/>
            <person name="El-Dorry H."/>
            <person name="Faria J.B."/>
            <person name="Ferreira A.J.S."/>
            <person name="Ferreira R.C.C."/>
            <person name="Ferro M.I.T."/>
            <person name="Formighieri E.F."/>
            <person name="Franco M.C."/>
            <person name="Greggio C.C."/>
            <person name="Gruber A."/>
            <person name="Katsuyama A.M."/>
            <person name="Kishi L.T."/>
            <person name="Leite R.P."/>
            <person name="Lemos E.G.M."/>
            <person name="Lemos M.V.F."/>
            <person name="Locali E.C."/>
            <person name="Machado M.A."/>
            <person name="Madeira A.M.B.N."/>
            <person name="Martinez-Rossi N.M."/>
            <person name="Martins E.C."/>
            <person name="Meidanis J."/>
            <person name="Menck C.F.M."/>
            <person name="Miyaki C.Y."/>
            <person name="Moon D.H."/>
            <person name="Moreira L.M."/>
            <person name="Novo M.T.M."/>
            <person name="Okura V.K."/>
            <person name="Oliveira M.C."/>
            <person name="Oliveira V.R."/>
            <person name="Pereira H.A."/>
            <person name="Rossi A."/>
            <person name="Sena J.A.D."/>
            <person name="Silva C."/>
            <person name="de Souza R.F."/>
            <person name="Spinola L.A.F."/>
            <person name="Takita M.A."/>
            <person name="Tamura R.E."/>
            <person name="Teixeira E.C."/>
            <person name="Tezza R.I.D."/>
            <person name="Trindade dos Santos M."/>
            <person name="Truffi D."/>
            <person name="Tsai S.M."/>
            <person name="White F.F."/>
            <person name="Setubal J.C."/>
            <person name="Kitajima J.P."/>
        </authorList>
    </citation>
    <scope>NUCLEOTIDE SEQUENCE [LARGE SCALE GENOMIC DNA]</scope>
    <source>
        <strain>306</strain>
    </source>
</reference>
<keyword id="KW-0001">2Fe-2S</keyword>
<keyword id="KW-0004">4Fe-4S</keyword>
<keyword id="KW-0093">Biotin biosynthesis</keyword>
<keyword id="KW-0408">Iron</keyword>
<keyword id="KW-0411">Iron-sulfur</keyword>
<keyword id="KW-0479">Metal-binding</keyword>
<keyword id="KW-0949">S-adenosyl-L-methionine</keyword>
<keyword id="KW-0808">Transferase</keyword>
<dbReference type="EC" id="2.8.1.6" evidence="1"/>
<dbReference type="EMBL" id="AE008923">
    <property type="protein sequence ID" value="AAM35280.1"/>
    <property type="molecule type" value="Genomic_DNA"/>
</dbReference>
<dbReference type="RefSeq" id="WP_011050284.1">
    <property type="nucleotide sequence ID" value="NC_003919.1"/>
</dbReference>
<dbReference type="SMR" id="Q8PQD7"/>
<dbReference type="GeneID" id="66909602"/>
<dbReference type="KEGG" id="xac:XAC0388"/>
<dbReference type="eggNOG" id="COG0502">
    <property type="taxonomic scope" value="Bacteria"/>
</dbReference>
<dbReference type="HOGENOM" id="CLU_033172_1_2_6"/>
<dbReference type="UniPathway" id="UPA00078">
    <property type="reaction ID" value="UER00162"/>
</dbReference>
<dbReference type="Proteomes" id="UP000000576">
    <property type="component" value="Chromosome"/>
</dbReference>
<dbReference type="GO" id="GO:0051537">
    <property type="term" value="F:2 iron, 2 sulfur cluster binding"/>
    <property type="evidence" value="ECO:0007669"/>
    <property type="project" value="UniProtKB-KW"/>
</dbReference>
<dbReference type="GO" id="GO:0051539">
    <property type="term" value="F:4 iron, 4 sulfur cluster binding"/>
    <property type="evidence" value="ECO:0007669"/>
    <property type="project" value="UniProtKB-KW"/>
</dbReference>
<dbReference type="GO" id="GO:0004076">
    <property type="term" value="F:biotin synthase activity"/>
    <property type="evidence" value="ECO:0007669"/>
    <property type="project" value="UniProtKB-UniRule"/>
</dbReference>
<dbReference type="GO" id="GO:0005506">
    <property type="term" value="F:iron ion binding"/>
    <property type="evidence" value="ECO:0007669"/>
    <property type="project" value="UniProtKB-UniRule"/>
</dbReference>
<dbReference type="GO" id="GO:0009102">
    <property type="term" value="P:biotin biosynthetic process"/>
    <property type="evidence" value="ECO:0007669"/>
    <property type="project" value="UniProtKB-UniRule"/>
</dbReference>
<dbReference type="CDD" id="cd01335">
    <property type="entry name" value="Radical_SAM"/>
    <property type="match status" value="1"/>
</dbReference>
<dbReference type="FunFam" id="3.20.20.70:FF:000011">
    <property type="entry name" value="Biotin synthase"/>
    <property type="match status" value="1"/>
</dbReference>
<dbReference type="Gene3D" id="3.20.20.70">
    <property type="entry name" value="Aldolase class I"/>
    <property type="match status" value="1"/>
</dbReference>
<dbReference type="HAMAP" id="MF_01694">
    <property type="entry name" value="BioB"/>
    <property type="match status" value="1"/>
</dbReference>
<dbReference type="InterPro" id="IPR013785">
    <property type="entry name" value="Aldolase_TIM"/>
</dbReference>
<dbReference type="InterPro" id="IPR010722">
    <property type="entry name" value="BATS_dom"/>
</dbReference>
<dbReference type="InterPro" id="IPR002684">
    <property type="entry name" value="Biotin_synth/BioAB"/>
</dbReference>
<dbReference type="InterPro" id="IPR024177">
    <property type="entry name" value="Biotin_synthase"/>
</dbReference>
<dbReference type="InterPro" id="IPR006638">
    <property type="entry name" value="Elp3/MiaA/NifB-like_rSAM"/>
</dbReference>
<dbReference type="InterPro" id="IPR007197">
    <property type="entry name" value="rSAM"/>
</dbReference>
<dbReference type="NCBIfam" id="TIGR00433">
    <property type="entry name" value="bioB"/>
    <property type="match status" value="1"/>
</dbReference>
<dbReference type="PANTHER" id="PTHR22976">
    <property type="entry name" value="BIOTIN SYNTHASE"/>
    <property type="match status" value="1"/>
</dbReference>
<dbReference type="PANTHER" id="PTHR22976:SF2">
    <property type="entry name" value="BIOTIN SYNTHASE, MITOCHONDRIAL"/>
    <property type="match status" value="1"/>
</dbReference>
<dbReference type="Pfam" id="PF06968">
    <property type="entry name" value="BATS"/>
    <property type="match status" value="1"/>
</dbReference>
<dbReference type="Pfam" id="PF04055">
    <property type="entry name" value="Radical_SAM"/>
    <property type="match status" value="1"/>
</dbReference>
<dbReference type="PIRSF" id="PIRSF001619">
    <property type="entry name" value="Biotin_synth"/>
    <property type="match status" value="1"/>
</dbReference>
<dbReference type="SFLD" id="SFLDF00272">
    <property type="entry name" value="biotin_synthase"/>
    <property type="match status" value="1"/>
</dbReference>
<dbReference type="SFLD" id="SFLDS00029">
    <property type="entry name" value="Radical_SAM"/>
    <property type="match status" value="1"/>
</dbReference>
<dbReference type="SMART" id="SM00876">
    <property type="entry name" value="BATS"/>
    <property type="match status" value="1"/>
</dbReference>
<dbReference type="SMART" id="SM00729">
    <property type="entry name" value="Elp3"/>
    <property type="match status" value="1"/>
</dbReference>
<dbReference type="SUPFAM" id="SSF102114">
    <property type="entry name" value="Radical SAM enzymes"/>
    <property type="match status" value="1"/>
</dbReference>
<dbReference type="PROSITE" id="PS51918">
    <property type="entry name" value="RADICAL_SAM"/>
    <property type="match status" value="1"/>
</dbReference>
<sequence length="344" mass="37779">MSVVLRHDWDRKELQALFDLPFPELLHRAASVHRAHFDPAQVQVSTLLSVKTGGCPEDCAYCPQAQRYDTGVSAQKLMETEEVVAKARQAKAAGASRFCMGAAWRSPKERDIPKVAAMIREVKAMGLETCATLGMLDAGQARALKDAGLDYYNHNLDTAPDYYDSIIHTRQYQDRLNTLEHVRDVGLKTCCGGIVGMGETREHRIGLLLALATLPAHPDSVPINQLVQVPGTPLHGTQQLDPFEFVRMIAVARIAMPKSMVRLSAGRETMSDELQALCFLAGANSIFYGEKLLTTGNPDTERDQALFQRLGLRPMQVTVDAAEHDHPGTVHAEITRSAACEHAA</sequence>
<organism>
    <name type="scientific">Xanthomonas axonopodis pv. citri (strain 306)</name>
    <dbReference type="NCBI Taxonomy" id="190486"/>
    <lineage>
        <taxon>Bacteria</taxon>
        <taxon>Pseudomonadati</taxon>
        <taxon>Pseudomonadota</taxon>
        <taxon>Gammaproteobacteria</taxon>
        <taxon>Lysobacterales</taxon>
        <taxon>Lysobacteraceae</taxon>
        <taxon>Xanthomonas</taxon>
    </lineage>
</organism>
<protein>
    <recommendedName>
        <fullName evidence="1">Biotin synthase</fullName>
        <ecNumber evidence="1">2.8.1.6</ecNumber>
    </recommendedName>
</protein>
<feature type="chain" id="PRO_0000381706" description="Biotin synthase">
    <location>
        <begin position="1"/>
        <end position="344"/>
    </location>
</feature>
<feature type="domain" description="Radical SAM core" evidence="2">
    <location>
        <begin position="40"/>
        <end position="267"/>
    </location>
</feature>
<feature type="binding site" evidence="1">
    <location>
        <position position="55"/>
    </location>
    <ligand>
        <name>[4Fe-4S] cluster</name>
        <dbReference type="ChEBI" id="CHEBI:49883"/>
        <note>4Fe-4S-S-AdoMet</note>
    </ligand>
</feature>
<feature type="binding site" evidence="1">
    <location>
        <position position="59"/>
    </location>
    <ligand>
        <name>[4Fe-4S] cluster</name>
        <dbReference type="ChEBI" id="CHEBI:49883"/>
        <note>4Fe-4S-S-AdoMet</note>
    </ligand>
</feature>
<feature type="binding site" evidence="1">
    <location>
        <position position="62"/>
    </location>
    <ligand>
        <name>[4Fe-4S] cluster</name>
        <dbReference type="ChEBI" id="CHEBI:49883"/>
        <note>4Fe-4S-S-AdoMet</note>
    </ligand>
</feature>
<feature type="binding site" evidence="1">
    <location>
        <position position="99"/>
    </location>
    <ligand>
        <name>[2Fe-2S] cluster</name>
        <dbReference type="ChEBI" id="CHEBI:190135"/>
    </ligand>
</feature>
<feature type="binding site" evidence="1">
    <location>
        <position position="130"/>
    </location>
    <ligand>
        <name>[2Fe-2S] cluster</name>
        <dbReference type="ChEBI" id="CHEBI:190135"/>
    </ligand>
</feature>
<feature type="binding site" evidence="1">
    <location>
        <position position="190"/>
    </location>
    <ligand>
        <name>[2Fe-2S] cluster</name>
        <dbReference type="ChEBI" id="CHEBI:190135"/>
    </ligand>
</feature>
<feature type="binding site" evidence="1">
    <location>
        <position position="262"/>
    </location>
    <ligand>
        <name>[2Fe-2S] cluster</name>
        <dbReference type="ChEBI" id="CHEBI:190135"/>
    </ligand>
</feature>
<evidence type="ECO:0000255" key="1">
    <source>
        <dbReference type="HAMAP-Rule" id="MF_01694"/>
    </source>
</evidence>
<evidence type="ECO:0000255" key="2">
    <source>
        <dbReference type="PROSITE-ProRule" id="PRU01266"/>
    </source>
</evidence>
<name>BIOB_XANAC</name>
<comment type="function">
    <text evidence="1">Catalyzes the conversion of dethiobiotin (DTB) to biotin by the insertion of a sulfur atom into dethiobiotin via a radical-based mechanism.</text>
</comment>
<comment type="catalytic activity">
    <reaction evidence="1">
        <text>(4R,5S)-dethiobiotin + (sulfur carrier)-SH + 2 reduced [2Fe-2S]-[ferredoxin] + 2 S-adenosyl-L-methionine = (sulfur carrier)-H + biotin + 2 5'-deoxyadenosine + 2 L-methionine + 2 oxidized [2Fe-2S]-[ferredoxin]</text>
        <dbReference type="Rhea" id="RHEA:22060"/>
        <dbReference type="Rhea" id="RHEA-COMP:10000"/>
        <dbReference type="Rhea" id="RHEA-COMP:10001"/>
        <dbReference type="Rhea" id="RHEA-COMP:14737"/>
        <dbReference type="Rhea" id="RHEA-COMP:14739"/>
        <dbReference type="ChEBI" id="CHEBI:17319"/>
        <dbReference type="ChEBI" id="CHEBI:29917"/>
        <dbReference type="ChEBI" id="CHEBI:33737"/>
        <dbReference type="ChEBI" id="CHEBI:33738"/>
        <dbReference type="ChEBI" id="CHEBI:57586"/>
        <dbReference type="ChEBI" id="CHEBI:57844"/>
        <dbReference type="ChEBI" id="CHEBI:59789"/>
        <dbReference type="ChEBI" id="CHEBI:64428"/>
        <dbReference type="ChEBI" id="CHEBI:149473"/>
        <dbReference type="EC" id="2.8.1.6"/>
    </reaction>
</comment>
<comment type="cofactor">
    <cofactor evidence="1">
        <name>[4Fe-4S] cluster</name>
        <dbReference type="ChEBI" id="CHEBI:49883"/>
    </cofactor>
    <text evidence="1">Binds 1 [4Fe-4S] cluster. The cluster is coordinated with 3 cysteines and an exchangeable S-adenosyl-L-methionine.</text>
</comment>
<comment type="cofactor">
    <cofactor evidence="1">
        <name>[2Fe-2S] cluster</name>
        <dbReference type="ChEBI" id="CHEBI:190135"/>
    </cofactor>
    <text evidence="1">Binds 1 [2Fe-2S] cluster. The cluster is coordinated with 3 cysteines and 1 arginine.</text>
</comment>
<comment type="pathway">
    <text evidence="1">Cofactor biosynthesis; biotin biosynthesis; biotin from 7,8-diaminononanoate: step 2/2.</text>
</comment>
<comment type="subunit">
    <text evidence="1">Homodimer.</text>
</comment>
<comment type="similarity">
    <text evidence="1">Belongs to the radical SAM superfamily. Biotin synthase family.</text>
</comment>
<proteinExistence type="inferred from homology"/>